<name>DLDH_TRYCR</name>
<accession>P90597</accession>
<accession>P90598</accession>
<accession>P90599</accession>
<protein>
    <recommendedName>
        <fullName>Dihydrolipoyl dehydrogenase</fullName>
        <ecNumber>1.8.1.4</ecNumber>
    </recommendedName>
    <alternativeName>
        <fullName>Dihydrolipoamide dehydrogenase</fullName>
    </alternativeName>
</protein>
<organism>
    <name type="scientific">Trypanosoma cruzi</name>
    <dbReference type="NCBI Taxonomy" id="5693"/>
    <lineage>
        <taxon>Eukaryota</taxon>
        <taxon>Discoba</taxon>
        <taxon>Euglenozoa</taxon>
        <taxon>Kinetoplastea</taxon>
        <taxon>Metakinetoplastina</taxon>
        <taxon>Trypanosomatida</taxon>
        <taxon>Trypanosomatidae</taxon>
        <taxon>Trypanosoma</taxon>
        <taxon>Schizotrypanum</taxon>
    </lineage>
</organism>
<feature type="chain" id="PRO_0000068009" description="Dihydrolipoyl dehydrogenase">
    <location>
        <begin position="1"/>
        <end position="477"/>
    </location>
</feature>
<feature type="active site" description="Proton acceptor" evidence="1">
    <location>
        <position position="456"/>
    </location>
</feature>
<feature type="binding site" evidence="1">
    <location>
        <begin position="41"/>
        <end position="50"/>
    </location>
    <ligand>
        <name>FAD</name>
        <dbReference type="ChEBI" id="CHEBI:57692"/>
    </ligand>
</feature>
<feature type="binding site" evidence="1">
    <location>
        <position position="59"/>
    </location>
    <ligand>
        <name>FAD</name>
        <dbReference type="ChEBI" id="CHEBI:57692"/>
    </ligand>
</feature>
<feature type="binding site" evidence="1">
    <location>
        <position position="124"/>
    </location>
    <ligand>
        <name>FAD</name>
        <dbReference type="ChEBI" id="CHEBI:57692"/>
    </ligand>
</feature>
<feature type="binding site" evidence="1">
    <location>
        <begin position="153"/>
        <end position="155"/>
    </location>
    <ligand>
        <name>FAD</name>
        <dbReference type="ChEBI" id="CHEBI:57692"/>
    </ligand>
</feature>
<feature type="binding site" evidence="1">
    <location>
        <begin position="190"/>
        <end position="197"/>
    </location>
    <ligand>
        <name>NAD(+)</name>
        <dbReference type="ChEBI" id="CHEBI:57540"/>
    </ligand>
</feature>
<feature type="binding site" evidence="1">
    <location>
        <position position="213"/>
    </location>
    <ligand>
        <name>NAD(+)</name>
        <dbReference type="ChEBI" id="CHEBI:57540"/>
    </ligand>
</feature>
<feature type="binding site" evidence="1">
    <location>
        <position position="248"/>
    </location>
    <ligand>
        <name>NAD(+)</name>
        <dbReference type="ChEBI" id="CHEBI:57540"/>
    </ligand>
</feature>
<feature type="binding site" evidence="1">
    <location>
        <position position="282"/>
    </location>
    <ligand>
        <name>NAD(+)</name>
        <dbReference type="ChEBI" id="CHEBI:57540"/>
    </ligand>
</feature>
<feature type="binding site" evidence="1">
    <location>
        <position position="323"/>
    </location>
    <ligand>
        <name>FAD</name>
        <dbReference type="ChEBI" id="CHEBI:57692"/>
    </ligand>
</feature>
<feature type="binding site" evidence="1">
    <location>
        <begin position="330"/>
        <end position="333"/>
    </location>
    <ligand>
        <name>FAD</name>
        <dbReference type="ChEBI" id="CHEBI:57692"/>
    </ligand>
</feature>
<feature type="disulfide bond" description="Redox-active" evidence="1">
    <location>
        <begin position="50"/>
        <end position="55"/>
    </location>
</feature>
<feature type="sequence variant" description="In allele 1 and allele 2.">
    <original>V</original>
    <variation>L</variation>
    <location>
        <position position="67"/>
    </location>
</feature>
<feature type="sequence variant" description="In allele 1 and allele 2.">
    <original>F</original>
    <variation>L</variation>
    <location>
        <position position="144"/>
    </location>
</feature>
<feature type="sequence variant" description="In allele 1 and allele 2.">
    <original>K</original>
    <variation>E</variation>
    <location>
        <position position="208"/>
    </location>
</feature>
<feature type="sequence variant" description="In allele 1.">
    <original>D</original>
    <variation>G</variation>
    <location>
        <position position="256"/>
    </location>
</feature>
<feature type="sequence variant" description="In allele 2.">
    <original>K</original>
    <variation>R</variation>
    <location>
        <position position="268"/>
    </location>
</feature>
<feature type="sequence variant" description="In allele 1 and allele 2.">
    <original>E</original>
    <variation>D</variation>
    <location>
        <position position="376"/>
    </location>
</feature>
<feature type="sequence variant" description="In allele 1 and allele 2.">
    <original>T</original>
    <variation>S</variation>
    <location>
        <position position="474"/>
    </location>
</feature>
<feature type="strand" evidence="3">
    <location>
        <begin position="12"/>
        <end position="17"/>
    </location>
</feature>
<feature type="helix" evidence="3">
    <location>
        <begin position="21"/>
        <end position="32"/>
    </location>
</feature>
<feature type="strand" evidence="3">
    <location>
        <begin position="37"/>
        <end position="47"/>
    </location>
</feature>
<feature type="helix" evidence="3">
    <location>
        <begin position="48"/>
        <end position="53"/>
    </location>
</feature>
<feature type="helix" evidence="3">
    <location>
        <begin position="55"/>
        <end position="73"/>
    </location>
</feature>
<feature type="helix" evidence="3">
    <location>
        <begin position="75"/>
        <end position="78"/>
    </location>
</feature>
<feature type="helix" evidence="3">
    <location>
        <begin position="83"/>
        <end position="85"/>
    </location>
</feature>
<feature type="helix" evidence="3">
    <location>
        <begin position="90"/>
        <end position="115"/>
    </location>
</feature>
<feature type="strand" evidence="3">
    <location>
        <begin position="118"/>
        <end position="128"/>
    </location>
</feature>
<feature type="strand" evidence="3">
    <location>
        <begin position="131"/>
        <end position="136"/>
    </location>
</feature>
<feature type="strand" evidence="3">
    <location>
        <begin position="141"/>
        <end position="151"/>
    </location>
</feature>
<feature type="strand" evidence="3">
    <location>
        <begin position="155"/>
        <end position="157"/>
    </location>
</feature>
<feature type="strand" evidence="3">
    <location>
        <begin position="167"/>
        <end position="171"/>
    </location>
</feature>
<feature type="helix" evidence="3">
    <location>
        <begin position="173"/>
        <end position="177"/>
    </location>
</feature>
<feature type="strand" evidence="3">
    <location>
        <begin position="184"/>
        <end position="189"/>
    </location>
</feature>
<feature type="helix" evidence="3">
    <location>
        <begin position="193"/>
        <end position="204"/>
    </location>
</feature>
<feature type="strand" evidence="3">
    <location>
        <begin position="208"/>
        <end position="212"/>
    </location>
</feature>
<feature type="strand" evidence="3">
    <location>
        <begin position="214"/>
        <end position="219"/>
    </location>
</feature>
<feature type="helix" evidence="3">
    <location>
        <begin position="224"/>
        <end position="237"/>
    </location>
</feature>
<feature type="strand" evidence="3">
    <location>
        <begin position="241"/>
        <end position="243"/>
    </location>
</feature>
<feature type="strand" evidence="3">
    <location>
        <begin position="247"/>
        <end position="253"/>
    </location>
</feature>
<feature type="strand" evidence="3">
    <location>
        <begin position="255"/>
        <end position="263"/>
    </location>
</feature>
<feature type="strand" evidence="3">
    <location>
        <begin position="269"/>
        <end position="279"/>
    </location>
</feature>
<feature type="strand" evidence="3">
    <location>
        <begin position="283"/>
        <end position="285"/>
    </location>
</feature>
<feature type="helix" evidence="3">
    <location>
        <begin position="292"/>
        <end position="295"/>
    </location>
</feature>
<feature type="strand" evidence="3">
    <location>
        <begin position="318"/>
        <end position="320"/>
    </location>
</feature>
<feature type="helix" evidence="3">
    <location>
        <begin position="322"/>
        <end position="324"/>
    </location>
</feature>
<feature type="strand" evidence="3">
    <location>
        <begin position="325"/>
        <end position="328"/>
    </location>
</feature>
<feature type="helix" evidence="3">
    <location>
        <begin position="332"/>
        <end position="346"/>
    </location>
</feature>
<feature type="strand" evidence="3">
    <location>
        <begin position="360"/>
        <end position="362"/>
    </location>
</feature>
<feature type="strand" evidence="3">
    <location>
        <begin position="364"/>
        <end position="372"/>
    </location>
</feature>
<feature type="helix" evidence="3">
    <location>
        <begin position="375"/>
        <end position="380"/>
    </location>
</feature>
<feature type="strand" evidence="3">
    <location>
        <begin position="385"/>
        <end position="391"/>
    </location>
</feature>
<feature type="helix" evidence="3">
    <location>
        <begin position="392"/>
        <end position="394"/>
    </location>
</feature>
<feature type="helix" evidence="3">
    <location>
        <begin position="396"/>
        <end position="400"/>
    </location>
</feature>
<feature type="strand" evidence="3">
    <location>
        <begin position="407"/>
        <end position="413"/>
    </location>
</feature>
<feature type="turn" evidence="3">
    <location>
        <begin position="414"/>
        <end position="416"/>
    </location>
</feature>
<feature type="strand" evidence="3">
    <location>
        <begin position="418"/>
        <end position="426"/>
    </location>
</feature>
<feature type="helix" evidence="3">
    <location>
        <begin position="429"/>
        <end position="441"/>
    </location>
</feature>
<feature type="helix" evidence="3">
    <location>
        <begin position="446"/>
        <end position="450"/>
    </location>
</feature>
<feature type="helix" evidence="3">
    <location>
        <begin position="460"/>
        <end position="471"/>
    </location>
</feature>
<evidence type="ECO:0000250" key="1"/>
<evidence type="ECO:0000305" key="2"/>
<evidence type="ECO:0007829" key="3">
    <source>
        <dbReference type="PDB" id="2QAE"/>
    </source>
</evidence>
<gene>
    <name type="primary">LPD</name>
</gene>
<sequence length="477" mass="50491">MFRRCAVKLNPYDVVVIGGGPGGYVASIKAAQLGMKTACVEKRGALGGTCLNVGCIPSKALLHATHVYHDAHANFARYGLMGGEGVTMDSAKMQQQKERAVKGLTGGVEYLFKKNKVTYYKGEGSFETAHSIRVNGLDGKQEMFETKKTIIATGSEPTELPFLPFDEKVVLSSTGALALPRVPKTMVVIGGGVIGLELGSVWARLGAKVTVVEFAPRCAPTLDEDVTNALVGALAKNEKMKFMTSTKVVGGTNNGDSVSLEVEGKNGKRETVTCEALLVSVGRRPFTGGLGLDKINVAKNERGFVKIGDHFETSIPDVYAIGDVVDKGPMLAHKAEDEGVACAEILAGKPGHVNYGVIPAVIYTMPEVASVGKSEEELKKEGVAYKVGKFPFNANSRAKAVSTEDGFVKVLVDKATDRILGVHIVCTTAGELIGEACLAMEYGASSEDVGRTCHAHPTMSEALKEACMALVAKTINF</sequence>
<keyword id="KW-0002">3D-structure</keyword>
<keyword id="KW-1015">Disulfide bond</keyword>
<keyword id="KW-0274">FAD</keyword>
<keyword id="KW-0285">Flavoprotein</keyword>
<keyword id="KW-0520">NAD</keyword>
<keyword id="KW-0560">Oxidoreductase</keyword>
<keyword id="KW-0676">Redox-active center</keyword>
<dbReference type="EC" id="1.8.1.4"/>
<dbReference type="EMBL" id="X89112">
    <property type="protein sequence ID" value="CAA61483.1"/>
    <property type="molecule type" value="mRNA"/>
</dbReference>
<dbReference type="EMBL" id="Y11262">
    <property type="protein sequence ID" value="CAA72132.1"/>
    <property type="molecule type" value="Genomic_DNA"/>
</dbReference>
<dbReference type="EMBL" id="Y11261">
    <property type="protein sequence ID" value="CAA72131.1"/>
    <property type="molecule type" value="Genomic_DNA"/>
</dbReference>
<dbReference type="PIR" id="S13863">
    <property type="entry name" value="S13863"/>
</dbReference>
<dbReference type="PDB" id="2QAE">
    <property type="method" value="X-ray"/>
    <property type="resolution" value="1.90 A"/>
    <property type="chains" value="A/B=10-477"/>
</dbReference>
<dbReference type="PDBsum" id="2QAE"/>
<dbReference type="SMR" id="P90597"/>
<dbReference type="VEuPathDB" id="TriTrypDB:BCY84_01530"/>
<dbReference type="VEuPathDB" id="TriTrypDB:C3747_120g73"/>
<dbReference type="VEuPathDB" id="TriTrypDB:C4B63_20g178"/>
<dbReference type="VEuPathDB" id="TriTrypDB:ECC02_003979"/>
<dbReference type="VEuPathDB" id="TriTrypDB:Tc_MARK_2745"/>
<dbReference type="VEuPathDB" id="TriTrypDB:TcBrA4_0036060"/>
<dbReference type="VEuPathDB" id="TriTrypDB:TcCL_NonESM01841"/>
<dbReference type="VEuPathDB" id="TriTrypDB:TcCLB.507089.270"/>
<dbReference type="VEuPathDB" id="TriTrypDB:TcCLB.511025.110"/>
<dbReference type="VEuPathDB" id="TriTrypDB:TCDM_02689"/>
<dbReference type="VEuPathDB" id="TriTrypDB:TcG_00055"/>
<dbReference type="VEuPathDB" id="TriTrypDB:TCSYLVIO_005316"/>
<dbReference type="VEuPathDB" id="TriTrypDB:TcYC6_0050100"/>
<dbReference type="EvolutionaryTrace" id="P90597"/>
<dbReference type="GO" id="GO:0005739">
    <property type="term" value="C:mitochondrion"/>
    <property type="evidence" value="ECO:0007669"/>
    <property type="project" value="TreeGrafter"/>
</dbReference>
<dbReference type="GO" id="GO:0045252">
    <property type="term" value="C:oxoglutarate dehydrogenase complex"/>
    <property type="evidence" value="ECO:0007669"/>
    <property type="project" value="TreeGrafter"/>
</dbReference>
<dbReference type="GO" id="GO:0004148">
    <property type="term" value="F:dihydrolipoyl dehydrogenase (NADH) activity"/>
    <property type="evidence" value="ECO:0007669"/>
    <property type="project" value="UniProtKB-EC"/>
</dbReference>
<dbReference type="GO" id="GO:0050660">
    <property type="term" value="F:flavin adenine dinucleotide binding"/>
    <property type="evidence" value="ECO:0007669"/>
    <property type="project" value="InterPro"/>
</dbReference>
<dbReference type="GO" id="GO:0006103">
    <property type="term" value="P:2-oxoglutarate metabolic process"/>
    <property type="evidence" value="ECO:0007669"/>
    <property type="project" value="TreeGrafter"/>
</dbReference>
<dbReference type="FunFam" id="3.30.390.30:FF:000001">
    <property type="entry name" value="Dihydrolipoyl dehydrogenase"/>
    <property type="match status" value="1"/>
</dbReference>
<dbReference type="FunFam" id="3.50.50.60:FF:000001">
    <property type="entry name" value="Dihydrolipoyl dehydrogenase, mitochondrial"/>
    <property type="match status" value="1"/>
</dbReference>
<dbReference type="Gene3D" id="3.30.390.30">
    <property type="match status" value="1"/>
</dbReference>
<dbReference type="Gene3D" id="3.50.50.60">
    <property type="entry name" value="FAD/NAD(P)-binding domain"/>
    <property type="match status" value="2"/>
</dbReference>
<dbReference type="InterPro" id="IPR050151">
    <property type="entry name" value="Class-I_Pyr_Nuc-Dis_Oxidored"/>
</dbReference>
<dbReference type="InterPro" id="IPR036188">
    <property type="entry name" value="FAD/NAD-bd_sf"/>
</dbReference>
<dbReference type="InterPro" id="IPR023753">
    <property type="entry name" value="FAD/NAD-binding_dom"/>
</dbReference>
<dbReference type="InterPro" id="IPR016156">
    <property type="entry name" value="FAD/NAD-linked_Rdtase_dimer_sf"/>
</dbReference>
<dbReference type="InterPro" id="IPR006258">
    <property type="entry name" value="Lipoamide_DH"/>
</dbReference>
<dbReference type="InterPro" id="IPR001100">
    <property type="entry name" value="Pyr_nuc-diS_OxRdtase"/>
</dbReference>
<dbReference type="InterPro" id="IPR004099">
    <property type="entry name" value="Pyr_nucl-diS_OxRdtase_dimer"/>
</dbReference>
<dbReference type="InterPro" id="IPR012999">
    <property type="entry name" value="Pyr_OxRdtase_I_AS"/>
</dbReference>
<dbReference type="NCBIfam" id="TIGR01350">
    <property type="entry name" value="lipoamide_DH"/>
    <property type="match status" value="1"/>
</dbReference>
<dbReference type="PANTHER" id="PTHR22912:SF151">
    <property type="entry name" value="DIHYDROLIPOYL DEHYDROGENASE, MITOCHONDRIAL"/>
    <property type="match status" value="1"/>
</dbReference>
<dbReference type="PANTHER" id="PTHR22912">
    <property type="entry name" value="DISULFIDE OXIDOREDUCTASE"/>
    <property type="match status" value="1"/>
</dbReference>
<dbReference type="Pfam" id="PF07992">
    <property type="entry name" value="Pyr_redox_2"/>
    <property type="match status" value="1"/>
</dbReference>
<dbReference type="Pfam" id="PF02852">
    <property type="entry name" value="Pyr_redox_dim"/>
    <property type="match status" value="1"/>
</dbReference>
<dbReference type="PIRSF" id="PIRSF000350">
    <property type="entry name" value="Mercury_reductase_MerA"/>
    <property type="match status" value="1"/>
</dbReference>
<dbReference type="PRINTS" id="PR00368">
    <property type="entry name" value="FADPNR"/>
</dbReference>
<dbReference type="PRINTS" id="PR00411">
    <property type="entry name" value="PNDRDTASEI"/>
</dbReference>
<dbReference type="SUPFAM" id="SSF51905">
    <property type="entry name" value="FAD/NAD(P)-binding domain"/>
    <property type="match status" value="1"/>
</dbReference>
<dbReference type="SUPFAM" id="SSF55424">
    <property type="entry name" value="FAD/NAD-linked reductases, dimerisation (C-terminal) domain"/>
    <property type="match status" value="1"/>
</dbReference>
<dbReference type="PROSITE" id="PS00076">
    <property type="entry name" value="PYRIDINE_REDOX_1"/>
    <property type="match status" value="1"/>
</dbReference>
<comment type="catalytic activity">
    <reaction>
        <text>N(6)-[(R)-dihydrolipoyl]-L-lysyl-[protein] + NAD(+) = N(6)-[(R)-lipoyl]-L-lysyl-[protein] + NADH + H(+)</text>
        <dbReference type="Rhea" id="RHEA:15045"/>
        <dbReference type="Rhea" id="RHEA-COMP:10474"/>
        <dbReference type="Rhea" id="RHEA-COMP:10475"/>
        <dbReference type="ChEBI" id="CHEBI:15378"/>
        <dbReference type="ChEBI" id="CHEBI:57540"/>
        <dbReference type="ChEBI" id="CHEBI:57945"/>
        <dbReference type="ChEBI" id="CHEBI:83099"/>
        <dbReference type="ChEBI" id="CHEBI:83100"/>
        <dbReference type="EC" id="1.8.1.4"/>
    </reaction>
</comment>
<comment type="cofactor">
    <cofactor evidence="1">
        <name>FAD</name>
        <dbReference type="ChEBI" id="CHEBI:57692"/>
    </cofactor>
    <text evidence="1">Binds 1 FAD per subunit.</text>
</comment>
<comment type="subunit">
    <text evidence="1">Homodimer.</text>
</comment>
<comment type="miscellaneous">
    <text>The active site is a redox-active disulfide bond.</text>
</comment>
<comment type="similarity">
    <text evidence="2">Belongs to the class-I pyridine nucleotide-disulfide oxidoreductase family.</text>
</comment>
<proteinExistence type="evidence at protein level"/>
<reference key="1">
    <citation type="journal article" date="1997" name="Eur. J. Biochem.">
        <title>Cloning, sequencing and functional expression of dihydrolipoamide dehydrogenase from the human pathogen Trypanosoma cruzi.</title>
        <authorList>
            <person name="Schoeneck R."/>
            <person name="Billaut-Mulot O."/>
            <person name="Numrich P."/>
            <person name="Ouaissi M.A."/>
            <person name="Krauth-Siegel R.L."/>
        </authorList>
    </citation>
    <scope>NUCLEOTIDE SEQUENCE [GENOMIC DNA / MRNA]</scope>
    <source>
        <strain>Y</strain>
    </source>
</reference>